<proteinExistence type="evidence at protein level"/>
<reference key="1">
    <citation type="journal article" date="2001" name="Biol. Plant.">
        <title>Characterization and localization of a novel protein (HFN40) in maize genotypes without husk leaf blades.</title>
        <authorList>
            <person name="El-Shemy H.A."/>
            <person name="Nishimura T."/>
            <person name="Fujita K."/>
        </authorList>
    </citation>
    <scope>PROTEIN SEQUENCE</scope>
    <source>
        <strain>cv. Line F1</strain>
        <strain>cv. Line W-41</strain>
        <strain>cv. Line W-79</strain>
        <tissue>Seed</tissue>
    </source>
</reference>
<accession>P82865</accession>
<protein>
    <recommendedName>
        <fullName>Suppressor protein HFN40</fullName>
    </recommendedName>
</protein>
<feature type="chain" id="PRO_0000083960" description="Suppressor protein HFN40">
    <location>
        <begin position="1"/>
        <end position="33" status="greater than"/>
    </location>
</feature>
<feature type="non-consecutive residues" evidence="1">
    <location>
        <begin position="6"/>
        <end position="7"/>
    </location>
</feature>
<feature type="non-consecutive residues" evidence="1">
    <location>
        <begin position="22"/>
        <end position="23"/>
    </location>
</feature>
<feature type="non-terminal residue">
    <location>
        <position position="33"/>
    </location>
</feature>
<dbReference type="InParanoid" id="P82865"/>
<dbReference type="Proteomes" id="UP000007305">
    <property type="component" value="Unplaced"/>
</dbReference>
<organism>
    <name type="scientific">Zea mays</name>
    <name type="common">Maize</name>
    <dbReference type="NCBI Taxonomy" id="4577"/>
    <lineage>
        <taxon>Eukaryota</taxon>
        <taxon>Viridiplantae</taxon>
        <taxon>Streptophyta</taxon>
        <taxon>Embryophyta</taxon>
        <taxon>Tracheophyta</taxon>
        <taxon>Spermatophyta</taxon>
        <taxon>Magnoliopsida</taxon>
        <taxon>Liliopsida</taxon>
        <taxon>Poales</taxon>
        <taxon>Poaceae</taxon>
        <taxon>PACMAD clade</taxon>
        <taxon>Panicoideae</taxon>
        <taxon>Andropogonodae</taxon>
        <taxon>Andropogoneae</taxon>
        <taxon>Tripsacinae</taxon>
        <taxon>Zea</taxon>
    </lineage>
</organism>
<evidence type="ECO:0000305" key="1"/>
<keyword id="KW-0903">Direct protein sequencing</keyword>
<keyword id="KW-1185">Reference proteome</keyword>
<sequence length="33" mass="3494">DAQEXKRVLGQLHGGPFSASAKYFGQAHGGXEK</sequence>
<name>HFN40_MAIZE</name>
<comment type="function">
    <text>Suppresses expansion of husk leaf blades.</text>
</comment>